<reference key="1">
    <citation type="journal article" date="2014" name="Stand. Genomic Sci.">
        <title>Complete genome sequence of Anabaena variabilis ATCC 29413.</title>
        <authorList>
            <person name="Thiel T."/>
            <person name="Pratte B.S."/>
            <person name="Zhong J."/>
            <person name="Goodwin L."/>
            <person name="Copeland A."/>
            <person name="Lucas S."/>
            <person name="Han C."/>
            <person name="Pitluck S."/>
            <person name="Land M.L."/>
            <person name="Kyrpides N.C."/>
            <person name="Woyke T."/>
        </authorList>
    </citation>
    <scope>NUCLEOTIDE SEQUENCE [LARGE SCALE GENOMIC DNA]</scope>
    <source>
        <strain>ATCC 29413 / PCC 7937</strain>
    </source>
</reference>
<organism>
    <name type="scientific">Trichormus variabilis (strain ATCC 29413 / PCC 7937)</name>
    <name type="common">Anabaena variabilis</name>
    <dbReference type="NCBI Taxonomy" id="240292"/>
    <lineage>
        <taxon>Bacteria</taxon>
        <taxon>Bacillati</taxon>
        <taxon>Cyanobacteriota</taxon>
        <taxon>Cyanophyceae</taxon>
        <taxon>Nostocales</taxon>
        <taxon>Nostocaceae</taxon>
        <taxon>Trichormus</taxon>
    </lineage>
</organism>
<name>PSBF_TRIV2</name>
<proteinExistence type="inferred from homology"/>
<dbReference type="EMBL" id="CP000117">
    <property type="protein sequence ID" value="ABA21476.1"/>
    <property type="molecule type" value="Genomic_DNA"/>
</dbReference>
<dbReference type="RefSeq" id="WP_011318656.1">
    <property type="nucleotide sequence ID" value="NC_007413.1"/>
</dbReference>
<dbReference type="SMR" id="Q3MC10"/>
<dbReference type="STRING" id="240292.Ava_1854"/>
<dbReference type="GeneID" id="58724526"/>
<dbReference type="KEGG" id="ava:Ava_1854"/>
<dbReference type="eggNOG" id="ENOG50332KX">
    <property type="taxonomic scope" value="Bacteria"/>
</dbReference>
<dbReference type="HOGENOM" id="CLU_211753_1_0_3"/>
<dbReference type="Proteomes" id="UP000002533">
    <property type="component" value="Chromosome"/>
</dbReference>
<dbReference type="GO" id="GO:0009539">
    <property type="term" value="C:photosystem II reaction center"/>
    <property type="evidence" value="ECO:0007669"/>
    <property type="project" value="InterPro"/>
</dbReference>
<dbReference type="GO" id="GO:0031676">
    <property type="term" value="C:plasma membrane-derived thylakoid membrane"/>
    <property type="evidence" value="ECO:0007669"/>
    <property type="project" value="UniProtKB-SubCell"/>
</dbReference>
<dbReference type="GO" id="GO:0009055">
    <property type="term" value="F:electron transfer activity"/>
    <property type="evidence" value="ECO:0007669"/>
    <property type="project" value="UniProtKB-UniRule"/>
</dbReference>
<dbReference type="GO" id="GO:0020037">
    <property type="term" value="F:heme binding"/>
    <property type="evidence" value="ECO:0007669"/>
    <property type="project" value="InterPro"/>
</dbReference>
<dbReference type="GO" id="GO:0005506">
    <property type="term" value="F:iron ion binding"/>
    <property type="evidence" value="ECO:0007669"/>
    <property type="project" value="UniProtKB-UniRule"/>
</dbReference>
<dbReference type="GO" id="GO:0009767">
    <property type="term" value="P:photosynthetic electron transport chain"/>
    <property type="evidence" value="ECO:0007669"/>
    <property type="project" value="InterPro"/>
</dbReference>
<dbReference type="HAMAP" id="MF_00643">
    <property type="entry name" value="PSII_PsbF"/>
    <property type="match status" value="1"/>
</dbReference>
<dbReference type="InterPro" id="IPR006241">
    <property type="entry name" value="PSII_cyt_b559_bsu"/>
</dbReference>
<dbReference type="InterPro" id="IPR006216">
    <property type="entry name" value="PSII_cyt_b559_CS"/>
</dbReference>
<dbReference type="InterPro" id="IPR013081">
    <property type="entry name" value="PSII_cyt_b559_N"/>
</dbReference>
<dbReference type="NCBIfam" id="TIGR01333">
    <property type="entry name" value="cyt_b559_beta"/>
    <property type="match status" value="1"/>
</dbReference>
<dbReference type="Pfam" id="PF00283">
    <property type="entry name" value="Cytochrom_B559"/>
    <property type="match status" value="1"/>
</dbReference>
<dbReference type="PIRSF" id="PIRSF000037">
    <property type="entry name" value="PsbF"/>
    <property type="match status" value="1"/>
</dbReference>
<dbReference type="SUPFAM" id="SSF161045">
    <property type="entry name" value="Cytochrome b559 subunits"/>
    <property type="match status" value="1"/>
</dbReference>
<dbReference type="PROSITE" id="PS00537">
    <property type="entry name" value="CYTOCHROME_B559"/>
    <property type="match status" value="1"/>
</dbReference>
<evidence type="ECO:0000255" key="1">
    <source>
        <dbReference type="HAMAP-Rule" id="MF_00643"/>
    </source>
</evidence>
<feature type="chain" id="PRO_0000233654" description="Cytochrome b559 subunit beta">
    <location>
        <begin position="1"/>
        <end position="45"/>
    </location>
</feature>
<feature type="transmembrane region" description="Helical" evidence="1">
    <location>
        <begin position="20"/>
        <end position="36"/>
    </location>
</feature>
<feature type="binding site" description="axial binding residue" evidence="1">
    <location>
        <position position="24"/>
    </location>
    <ligand>
        <name>heme</name>
        <dbReference type="ChEBI" id="CHEBI:30413"/>
        <note>ligand shared with alpha subunit</note>
    </ligand>
    <ligandPart>
        <name>Fe</name>
        <dbReference type="ChEBI" id="CHEBI:18248"/>
    </ligandPart>
</feature>
<keyword id="KW-0249">Electron transport</keyword>
<keyword id="KW-0349">Heme</keyword>
<keyword id="KW-0408">Iron</keyword>
<keyword id="KW-0472">Membrane</keyword>
<keyword id="KW-0479">Metal-binding</keyword>
<keyword id="KW-0602">Photosynthesis</keyword>
<keyword id="KW-0604">Photosystem II</keyword>
<keyword id="KW-0793">Thylakoid</keyword>
<keyword id="KW-0812">Transmembrane</keyword>
<keyword id="KW-1133">Transmembrane helix</keyword>
<keyword id="KW-0813">Transport</keyword>
<sequence>MTSGNNINQPVTYPIFTVRWLAVHTLAVPTVFFLGAIASMQFIQR</sequence>
<accession>Q3MC10</accession>
<comment type="function">
    <text evidence="1">This b-type cytochrome is tightly associated with the reaction center of photosystem II (PSII). PSII is a light-driven water:plastoquinone oxidoreductase that uses light energy to abstract electrons from H(2)O, generating O(2) and a proton gradient subsequently used for ATP formation. It consists of a core antenna complex that captures photons, and an electron transfer chain that converts photonic excitation into a charge separation.</text>
</comment>
<comment type="cofactor">
    <cofactor evidence="1">
        <name>heme b</name>
        <dbReference type="ChEBI" id="CHEBI:60344"/>
    </cofactor>
    <text evidence="1">With its partner (PsbE) binds heme. PSII binds additional chlorophylls, carotenoids and specific lipids.</text>
</comment>
<comment type="subunit">
    <text evidence="1">Heterodimer of an alpha subunit and a beta subunit. PSII is composed of 1 copy each of membrane proteins PsbA, PsbB, PsbC, PsbD, PsbE, PsbF, PsbH, PsbI, PsbJ, PsbK, PsbL, PsbM, PsbT, PsbX, PsbY, PsbZ, Psb30/Ycf12, peripheral proteins PsbO, CyanoQ (PsbQ), PsbU, PsbV and a large number of cofactors. It forms dimeric complexes.</text>
</comment>
<comment type="subcellular location">
    <subcellularLocation>
        <location evidence="1">Cellular thylakoid membrane</location>
        <topology evidence="1">Single-pass membrane protein</topology>
    </subcellularLocation>
</comment>
<comment type="similarity">
    <text evidence="1">Belongs to the PsbE/PsbF family.</text>
</comment>
<protein>
    <recommendedName>
        <fullName evidence="1">Cytochrome b559 subunit beta</fullName>
    </recommendedName>
    <alternativeName>
        <fullName evidence="1">PSII reaction center subunit VI</fullName>
    </alternativeName>
</protein>
<gene>
    <name evidence="1" type="primary">psbF</name>
    <name type="ordered locus">Ava_1854</name>
</gene>